<proteinExistence type="inferred from homology"/>
<gene>
    <name evidence="1" type="primary">fbp</name>
    <name type="ordered locus">PMI3397</name>
</gene>
<name>F16PA_PROMH</name>
<keyword id="KW-0119">Carbohydrate metabolism</keyword>
<keyword id="KW-0963">Cytoplasm</keyword>
<keyword id="KW-0378">Hydrolase</keyword>
<keyword id="KW-0460">Magnesium</keyword>
<keyword id="KW-0479">Metal-binding</keyword>
<keyword id="KW-1185">Reference proteome</keyword>
<protein>
    <recommendedName>
        <fullName evidence="1">Fructose-1,6-bisphosphatase class 1</fullName>
        <shortName evidence="1">FBPase class 1</shortName>
        <ecNumber evidence="1">3.1.3.11</ecNumber>
    </recommendedName>
    <alternativeName>
        <fullName evidence="1">D-fructose-1,6-bisphosphate 1-phosphohydrolase class 1</fullName>
    </alternativeName>
</protein>
<organism>
    <name type="scientific">Proteus mirabilis (strain HI4320)</name>
    <dbReference type="NCBI Taxonomy" id="529507"/>
    <lineage>
        <taxon>Bacteria</taxon>
        <taxon>Pseudomonadati</taxon>
        <taxon>Pseudomonadota</taxon>
        <taxon>Gammaproteobacteria</taxon>
        <taxon>Enterobacterales</taxon>
        <taxon>Morganellaceae</taxon>
        <taxon>Proteus</taxon>
    </lineage>
</organism>
<reference key="1">
    <citation type="journal article" date="2008" name="J. Bacteriol.">
        <title>Complete genome sequence of uropathogenic Proteus mirabilis, a master of both adherence and motility.</title>
        <authorList>
            <person name="Pearson M.M."/>
            <person name="Sebaihia M."/>
            <person name="Churcher C."/>
            <person name="Quail M.A."/>
            <person name="Seshasayee A.S."/>
            <person name="Luscombe N.M."/>
            <person name="Abdellah Z."/>
            <person name="Arrosmith C."/>
            <person name="Atkin B."/>
            <person name="Chillingworth T."/>
            <person name="Hauser H."/>
            <person name="Jagels K."/>
            <person name="Moule S."/>
            <person name="Mungall K."/>
            <person name="Norbertczak H."/>
            <person name="Rabbinowitsch E."/>
            <person name="Walker D."/>
            <person name="Whithead S."/>
            <person name="Thomson N.R."/>
            <person name="Rather P.N."/>
            <person name="Parkhill J."/>
            <person name="Mobley H.L.T."/>
        </authorList>
    </citation>
    <scope>NUCLEOTIDE SEQUENCE [LARGE SCALE GENOMIC DNA]</scope>
    <source>
        <strain>HI4320</strain>
    </source>
</reference>
<accession>B4F298</accession>
<sequence length="335" mass="36817">MKTLGEFIVEKQQDFPHATGELTALLSAIKLGAKIIHRDINKAGLVDILGTNGVSNVQGEAQMKLDLYANEKLKAALKARGEVAGIGSEEEDDIVIFEGDRAENAKYVVLMDPLDGSSNIDVNVSVGTIFSIYHRITPIGQPVTLDDFLQPGNRQVAAGYVVYGSSTMLVYTTGCGVHAFTYDPSLGVFCLSHESVHFPPTGNMYSINEGNYIKFPLGVKKYIKYCQEQDATTNRPYTTRYIGSLVADFHRNLLKGGIYIYPSTASHPNGKLRLLYECNPMAFLAEQAGGKASNGKDRILDIKPTELHQRMPFFVGTKAMVEQAEAFMAQYPDEE</sequence>
<evidence type="ECO:0000255" key="1">
    <source>
        <dbReference type="HAMAP-Rule" id="MF_01855"/>
    </source>
</evidence>
<comment type="catalytic activity">
    <reaction evidence="1">
        <text>beta-D-fructose 1,6-bisphosphate + H2O = beta-D-fructose 6-phosphate + phosphate</text>
        <dbReference type="Rhea" id="RHEA:11064"/>
        <dbReference type="ChEBI" id="CHEBI:15377"/>
        <dbReference type="ChEBI" id="CHEBI:32966"/>
        <dbReference type="ChEBI" id="CHEBI:43474"/>
        <dbReference type="ChEBI" id="CHEBI:57634"/>
        <dbReference type="EC" id="3.1.3.11"/>
    </reaction>
</comment>
<comment type="cofactor">
    <cofactor evidence="1">
        <name>Mg(2+)</name>
        <dbReference type="ChEBI" id="CHEBI:18420"/>
    </cofactor>
    <text evidence="1">Binds 2 magnesium ions per subunit.</text>
</comment>
<comment type="pathway">
    <text evidence="1">Carbohydrate biosynthesis; gluconeogenesis.</text>
</comment>
<comment type="subunit">
    <text evidence="1">Homotetramer.</text>
</comment>
<comment type="subcellular location">
    <subcellularLocation>
        <location evidence="1">Cytoplasm</location>
    </subcellularLocation>
</comment>
<comment type="similarity">
    <text evidence="1">Belongs to the FBPase class 1 family.</text>
</comment>
<feature type="chain" id="PRO_0000364635" description="Fructose-1,6-bisphosphatase class 1">
    <location>
        <begin position="1"/>
        <end position="335"/>
    </location>
</feature>
<feature type="binding site" evidence="1">
    <location>
        <position position="89"/>
    </location>
    <ligand>
        <name>Mg(2+)</name>
        <dbReference type="ChEBI" id="CHEBI:18420"/>
        <label>1</label>
    </ligand>
</feature>
<feature type="binding site" evidence="1">
    <location>
        <position position="112"/>
    </location>
    <ligand>
        <name>Mg(2+)</name>
        <dbReference type="ChEBI" id="CHEBI:18420"/>
        <label>1</label>
    </ligand>
</feature>
<feature type="binding site" evidence="1">
    <location>
        <position position="112"/>
    </location>
    <ligand>
        <name>Mg(2+)</name>
        <dbReference type="ChEBI" id="CHEBI:18420"/>
        <label>2</label>
    </ligand>
</feature>
<feature type="binding site" evidence="1">
    <location>
        <position position="114"/>
    </location>
    <ligand>
        <name>Mg(2+)</name>
        <dbReference type="ChEBI" id="CHEBI:18420"/>
        <label>1</label>
    </ligand>
</feature>
<feature type="binding site" evidence="1">
    <location>
        <begin position="115"/>
        <end position="118"/>
    </location>
    <ligand>
        <name>substrate</name>
    </ligand>
</feature>
<feature type="binding site" evidence="1">
    <location>
        <position position="115"/>
    </location>
    <ligand>
        <name>Mg(2+)</name>
        <dbReference type="ChEBI" id="CHEBI:18420"/>
        <label>2</label>
    </ligand>
</feature>
<feature type="binding site" evidence="1">
    <location>
        <position position="208"/>
    </location>
    <ligand>
        <name>substrate</name>
    </ligand>
</feature>
<feature type="binding site" evidence="1">
    <location>
        <position position="241"/>
    </location>
    <ligand>
        <name>substrate</name>
    </ligand>
</feature>
<feature type="binding site" evidence="1">
    <location>
        <position position="271"/>
    </location>
    <ligand>
        <name>substrate</name>
    </ligand>
</feature>
<feature type="binding site" evidence="1">
    <location>
        <position position="277"/>
    </location>
    <ligand>
        <name>Mg(2+)</name>
        <dbReference type="ChEBI" id="CHEBI:18420"/>
        <label>2</label>
    </ligand>
</feature>
<dbReference type="EC" id="3.1.3.11" evidence="1"/>
<dbReference type="EMBL" id="AM942759">
    <property type="protein sequence ID" value="CAR46659.1"/>
    <property type="molecule type" value="Genomic_DNA"/>
</dbReference>
<dbReference type="RefSeq" id="WP_012368727.1">
    <property type="nucleotide sequence ID" value="NC_010554.1"/>
</dbReference>
<dbReference type="SMR" id="B4F298"/>
<dbReference type="EnsemblBacteria" id="CAR46659">
    <property type="protein sequence ID" value="CAR46659"/>
    <property type="gene ID" value="PMI3397"/>
</dbReference>
<dbReference type="GeneID" id="6800041"/>
<dbReference type="KEGG" id="pmr:PMI3397"/>
<dbReference type="PATRIC" id="fig|529507.6.peg.3324"/>
<dbReference type="eggNOG" id="COG0158">
    <property type="taxonomic scope" value="Bacteria"/>
</dbReference>
<dbReference type="HOGENOM" id="CLU_039977_2_2_6"/>
<dbReference type="UniPathway" id="UPA00138"/>
<dbReference type="Proteomes" id="UP000008319">
    <property type="component" value="Chromosome"/>
</dbReference>
<dbReference type="GO" id="GO:0005829">
    <property type="term" value="C:cytosol"/>
    <property type="evidence" value="ECO:0007669"/>
    <property type="project" value="TreeGrafter"/>
</dbReference>
<dbReference type="GO" id="GO:0042132">
    <property type="term" value="F:fructose 1,6-bisphosphate 1-phosphatase activity"/>
    <property type="evidence" value="ECO:0007669"/>
    <property type="project" value="UniProtKB-UniRule"/>
</dbReference>
<dbReference type="GO" id="GO:0000287">
    <property type="term" value="F:magnesium ion binding"/>
    <property type="evidence" value="ECO:0007669"/>
    <property type="project" value="UniProtKB-UniRule"/>
</dbReference>
<dbReference type="GO" id="GO:0030388">
    <property type="term" value="P:fructose 1,6-bisphosphate metabolic process"/>
    <property type="evidence" value="ECO:0007669"/>
    <property type="project" value="TreeGrafter"/>
</dbReference>
<dbReference type="GO" id="GO:0006002">
    <property type="term" value="P:fructose 6-phosphate metabolic process"/>
    <property type="evidence" value="ECO:0007669"/>
    <property type="project" value="TreeGrafter"/>
</dbReference>
<dbReference type="GO" id="GO:0006000">
    <property type="term" value="P:fructose metabolic process"/>
    <property type="evidence" value="ECO:0007669"/>
    <property type="project" value="TreeGrafter"/>
</dbReference>
<dbReference type="GO" id="GO:0006094">
    <property type="term" value="P:gluconeogenesis"/>
    <property type="evidence" value="ECO:0007669"/>
    <property type="project" value="UniProtKB-UniRule"/>
</dbReference>
<dbReference type="GO" id="GO:0005986">
    <property type="term" value="P:sucrose biosynthetic process"/>
    <property type="evidence" value="ECO:0007669"/>
    <property type="project" value="TreeGrafter"/>
</dbReference>
<dbReference type="CDD" id="cd00354">
    <property type="entry name" value="FBPase"/>
    <property type="match status" value="1"/>
</dbReference>
<dbReference type="FunFam" id="3.30.540.10:FF:000002">
    <property type="entry name" value="Fructose-1,6-bisphosphatase class 1"/>
    <property type="match status" value="1"/>
</dbReference>
<dbReference type="FunFam" id="3.40.190.80:FF:000001">
    <property type="entry name" value="Fructose-1,6-bisphosphatase class 1"/>
    <property type="match status" value="1"/>
</dbReference>
<dbReference type="Gene3D" id="3.40.190.80">
    <property type="match status" value="1"/>
</dbReference>
<dbReference type="Gene3D" id="3.30.540.10">
    <property type="entry name" value="Fructose-1,6-Bisphosphatase, subunit A, domain 1"/>
    <property type="match status" value="1"/>
</dbReference>
<dbReference type="HAMAP" id="MF_01855">
    <property type="entry name" value="FBPase_class1"/>
    <property type="match status" value="1"/>
</dbReference>
<dbReference type="InterPro" id="IPR044015">
    <property type="entry name" value="FBPase_C_dom"/>
</dbReference>
<dbReference type="InterPro" id="IPR000146">
    <property type="entry name" value="FBPase_class-1"/>
</dbReference>
<dbReference type="InterPro" id="IPR033391">
    <property type="entry name" value="FBPase_N"/>
</dbReference>
<dbReference type="InterPro" id="IPR028343">
    <property type="entry name" value="FBPtase"/>
</dbReference>
<dbReference type="InterPro" id="IPR020548">
    <property type="entry name" value="Fructose_bisphosphatase_AS"/>
</dbReference>
<dbReference type="NCBIfam" id="NF006778">
    <property type="entry name" value="PRK09293.1-1"/>
    <property type="match status" value="1"/>
</dbReference>
<dbReference type="PANTHER" id="PTHR11556">
    <property type="entry name" value="FRUCTOSE-1,6-BISPHOSPHATASE-RELATED"/>
    <property type="match status" value="1"/>
</dbReference>
<dbReference type="PANTHER" id="PTHR11556:SF35">
    <property type="entry name" value="SEDOHEPTULOSE-1,7-BISPHOSPHATASE, CHLOROPLASTIC"/>
    <property type="match status" value="1"/>
</dbReference>
<dbReference type="Pfam" id="PF00316">
    <property type="entry name" value="FBPase"/>
    <property type="match status" value="1"/>
</dbReference>
<dbReference type="Pfam" id="PF18913">
    <property type="entry name" value="FBPase_C"/>
    <property type="match status" value="1"/>
</dbReference>
<dbReference type="PIRSF" id="PIRSF500210">
    <property type="entry name" value="FBPtase"/>
    <property type="match status" value="1"/>
</dbReference>
<dbReference type="PIRSF" id="PIRSF000904">
    <property type="entry name" value="FBPtase_SBPase"/>
    <property type="match status" value="1"/>
</dbReference>
<dbReference type="PRINTS" id="PR00115">
    <property type="entry name" value="F16BPHPHTASE"/>
</dbReference>
<dbReference type="SUPFAM" id="SSF56655">
    <property type="entry name" value="Carbohydrate phosphatase"/>
    <property type="match status" value="1"/>
</dbReference>
<dbReference type="PROSITE" id="PS00124">
    <property type="entry name" value="FBPASE"/>
    <property type="match status" value="1"/>
</dbReference>